<evidence type="ECO:0000255" key="1">
    <source>
        <dbReference type="HAMAP-Rule" id="MF_00251"/>
    </source>
</evidence>
<evidence type="ECO:0000305" key="2"/>
<reference key="1">
    <citation type="journal article" date="2008" name="J. Bacteriol.">
        <title>Genome of the actinomycete plant pathogen Clavibacter michiganensis subsp. sepedonicus suggests recent niche adaptation.</title>
        <authorList>
            <person name="Bentley S.D."/>
            <person name="Corton C."/>
            <person name="Brown S.E."/>
            <person name="Barron A."/>
            <person name="Clark L."/>
            <person name="Doggett J."/>
            <person name="Harris B."/>
            <person name="Ormond D."/>
            <person name="Quail M.A."/>
            <person name="May G."/>
            <person name="Francis D."/>
            <person name="Knudson D."/>
            <person name="Parkhill J."/>
            <person name="Ishimaru C.A."/>
        </authorList>
    </citation>
    <scope>NUCLEOTIDE SEQUENCE [LARGE SCALE GENOMIC DNA]</scope>
    <source>
        <strain>ATCC 33113 / DSM 20744 / JCM 9667 / LMG 2889 / ICMP 2535 / C-1</strain>
    </source>
</reference>
<organism>
    <name type="scientific">Clavibacter sepedonicus</name>
    <name type="common">Clavibacter michiganensis subsp. sepedonicus</name>
    <dbReference type="NCBI Taxonomy" id="31964"/>
    <lineage>
        <taxon>Bacteria</taxon>
        <taxon>Bacillati</taxon>
        <taxon>Actinomycetota</taxon>
        <taxon>Actinomycetes</taxon>
        <taxon>Micrococcales</taxon>
        <taxon>Microbacteriaceae</taxon>
        <taxon>Clavibacter</taxon>
    </lineage>
</organism>
<name>RL361_CLASE</name>
<proteinExistence type="inferred from homology"/>
<feature type="chain" id="PRO_0000344660" description="Large ribosomal subunit protein bL36A">
    <location>
        <begin position="1"/>
        <end position="37"/>
    </location>
</feature>
<gene>
    <name evidence="1" type="primary">rpmJ1</name>
    <name type="ordered locus">CMS0313</name>
</gene>
<keyword id="KW-0687">Ribonucleoprotein</keyword>
<keyword id="KW-0689">Ribosomal protein</keyword>
<dbReference type="EMBL" id="AM849034">
    <property type="protein sequence ID" value="CAQ00434.1"/>
    <property type="molecule type" value="Genomic_DNA"/>
</dbReference>
<dbReference type="SMR" id="B0RB69"/>
<dbReference type="STRING" id="31964.CMS0313"/>
<dbReference type="KEGG" id="cms:CMS0313"/>
<dbReference type="eggNOG" id="COG0257">
    <property type="taxonomic scope" value="Bacteria"/>
</dbReference>
<dbReference type="HOGENOM" id="CLU_135723_6_2_11"/>
<dbReference type="OrthoDB" id="9802520at2"/>
<dbReference type="Proteomes" id="UP000001318">
    <property type="component" value="Chromosome"/>
</dbReference>
<dbReference type="GO" id="GO:0005737">
    <property type="term" value="C:cytoplasm"/>
    <property type="evidence" value="ECO:0007669"/>
    <property type="project" value="UniProtKB-ARBA"/>
</dbReference>
<dbReference type="GO" id="GO:1990904">
    <property type="term" value="C:ribonucleoprotein complex"/>
    <property type="evidence" value="ECO:0007669"/>
    <property type="project" value="UniProtKB-KW"/>
</dbReference>
<dbReference type="GO" id="GO:0005840">
    <property type="term" value="C:ribosome"/>
    <property type="evidence" value="ECO:0007669"/>
    <property type="project" value="UniProtKB-KW"/>
</dbReference>
<dbReference type="GO" id="GO:0003735">
    <property type="term" value="F:structural constituent of ribosome"/>
    <property type="evidence" value="ECO:0007669"/>
    <property type="project" value="InterPro"/>
</dbReference>
<dbReference type="GO" id="GO:0006412">
    <property type="term" value="P:translation"/>
    <property type="evidence" value="ECO:0007669"/>
    <property type="project" value="UniProtKB-UniRule"/>
</dbReference>
<dbReference type="HAMAP" id="MF_00251">
    <property type="entry name" value="Ribosomal_bL36"/>
    <property type="match status" value="1"/>
</dbReference>
<dbReference type="InterPro" id="IPR000473">
    <property type="entry name" value="Ribosomal_bL36"/>
</dbReference>
<dbReference type="InterPro" id="IPR035977">
    <property type="entry name" value="Ribosomal_bL36_sp"/>
</dbReference>
<dbReference type="NCBIfam" id="TIGR01022">
    <property type="entry name" value="rpmJ_bact"/>
    <property type="match status" value="1"/>
</dbReference>
<dbReference type="PANTHER" id="PTHR42888">
    <property type="entry name" value="50S RIBOSOMAL PROTEIN L36, CHLOROPLASTIC"/>
    <property type="match status" value="1"/>
</dbReference>
<dbReference type="PANTHER" id="PTHR42888:SF1">
    <property type="entry name" value="LARGE RIBOSOMAL SUBUNIT PROTEIN BL36C"/>
    <property type="match status" value="1"/>
</dbReference>
<dbReference type="Pfam" id="PF00444">
    <property type="entry name" value="Ribosomal_L36"/>
    <property type="match status" value="1"/>
</dbReference>
<dbReference type="SUPFAM" id="SSF57840">
    <property type="entry name" value="Ribosomal protein L36"/>
    <property type="match status" value="1"/>
</dbReference>
<dbReference type="PROSITE" id="PS00828">
    <property type="entry name" value="RIBOSOMAL_L36"/>
    <property type="match status" value="1"/>
</dbReference>
<accession>B0RB69</accession>
<protein>
    <recommendedName>
        <fullName evidence="1">Large ribosomal subunit protein bL36A</fullName>
    </recommendedName>
    <alternativeName>
        <fullName evidence="2">50S ribosomal protein L36 1</fullName>
    </alternativeName>
</protein>
<sequence>MKVNPSVKRICEKCKVIRRNGRVRVICENPRHKQVQG</sequence>
<comment type="similarity">
    <text evidence="1">Belongs to the bacterial ribosomal protein bL36 family.</text>
</comment>